<keyword id="KW-0227">DNA damage</keyword>
<keyword id="KW-0234">DNA repair</keyword>
<keyword id="KW-0235">DNA replication</keyword>
<keyword id="KW-0436">Ligase</keyword>
<keyword id="KW-0460">Magnesium</keyword>
<keyword id="KW-0464">Manganese</keyword>
<keyword id="KW-0479">Metal-binding</keyword>
<keyword id="KW-0520">NAD</keyword>
<keyword id="KW-1185">Reference proteome</keyword>
<keyword id="KW-0862">Zinc</keyword>
<feature type="chain" id="PRO_0000313302" description="DNA ligase">
    <location>
        <begin position="1"/>
        <end position="701"/>
    </location>
</feature>
<feature type="domain" description="BRCT" evidence="1">
    <location>
        <begin position="623"/>
        <end position="701"/>
    </location>
</feature>
<feature type="active site" description="N6-AMP-lysine intermediate" evidence="1">
    <location>
        <position position="128"/>
    </location>
</feature>
<feature type="binding site" evidence="1">
    <location>
        <begin position="43"/>
        <end position="47"/>
    </location>
    <ligand>
        <name>NAD(+)</name>
        <dbReference type="ChEBI" id="CHEBI:57540"/>
    </ligand>
</feature>
<feature type="binding site" evidence="1">
    <location>
        <begin position="92"/>
        <end position="93"/>
    </location>
    <ligand>
        <name>NAD(+)</name>
        <dbReference type="ChEBI" id="CHEBI:57540"/>
    </ligand>
</feature>
<feature type="binding site" evidence="1">
    <location>
        <position position="126"/>
    </location>
    <ligand>
        <name>NAD(+)</name>
        <dbReference type="ChEBI" id="CHEBI:57540"/>
    </ligand>
</feature>
<feature type="binding site" evidence="1">
    <location>
        <position position="149"/>
    </location>
    <ligand>
        <name>NAD(+)</name>
        <dbReference type="ChEBI" id="CHEBI:57540"/>
    </ligand>
</feature>
<feature type="binding site" evidence="1">
    <location>
        <position position="186"/>
    </location>
    <ligand>
        <name>NAD(+)</name>
        <dbReference type="ChEBI" id="CHEBI:57540"/>
    </ligand>
</feature>
<feature type="binding site" evidence="1">
    <location>
        <position position="302"/>
    </location>
    <ligand>
        <name>NAD(+)</name>
        <dbReference type="ChEBI" id="CHEBI:57540"/>
    </ligand>
</feature>
<feature type="binding site" evidence="1">
    <location>
        <position position="326"/>
    </location>
    <ligand>
        <name>NAD(+)</name>
        <dbReference type="ChEBI" id="CHEBI:57540"/>
    </ligand>
</feature>
<feature type="binding site" evidence="1">
    <location>
        <position position="420"/>
    </location>
    <ligand>
        <name>Zn(2+)</name>
        <dbReference type="ChEBI" id="CHEBI:29105"/>
    </ligand>
</feature>
<feature type="binding site" evidence="1">
    <location>
        <position position="423"/>
    </location>
    <ligand>
        <name>Zn(2+)</name>
        <dbReference type="ChEBI" id="CHEBI:29105"/>
    </ligand>
</feature>
<feature type="binding site" evidence="1">
    <location>
        <position position="444"/>
    </location>
    <ligand>
        <name>Zn(2+)</name>
        <dbReference type="ChEBI" id="CHEBI:29105"/>
    </ligand>
</feature>
<feature type="binding site" evidence="1">
    <location>
        <position position="450"/>
    </location>
    <ligand>
        <name>Zn(2+)</name>
        <dbReference type="ChEBI" id="CHEBI:29105"/>
    </ligand>
</feature>
<protein>
    <recommendedName>
        <fullName evidence="1">DNA ligase</fullName>
        <ecNumber evidence="1">6.5.1.2</ecNumber>
    </recommendedName>
    <alternativeName>
        <fullName evidence="1">Polydeoxyribonucleotide synthase [NAD(+)]</fullName>
    </alternativeName>
</protein>
<organism>
    <name type="scientific">Maricaulis maris (strain MCS10)</name>
    <name type="common">Caulobacter maris</name>
    <dbReference type="NCBI Taxonomy" id="394221"/>
    <lineage>
        <taxon>Bacteria</taxon>
        <taxon>Pseudomonadati</taxon>
        <taxon>Pseudomonadota</taxon>
        <taxon>Alphaproteobacteria</taxon>
        <taxon>Maricaulales</taxon>
        <taxon>Maricaulaceae</taxon>
        <taxon>Maricaulis</taxon>
    </lineage>
</organism>
<sequence>MSALKDVDQLTEAEARAEHARLAREIAGHDKAYYQSDAPKISDAAYDALRRKLEAIEVRFPQFIDLLSPTQRVGAVPSGKFGEIRHAVPMLSLGNAFNDEDVADFVGRIRRFLGLAESDVVAVTAEPKIDGLSASLRYVGGKLVHGATRGDGQTGEDVTQNLLTLDDIPDTLPPGDWPDVVEVRGEVYMSHADFAALNERQIEAGKDAYKNPRNAAAGSLRQIDPKMTSQRPLRFFAYAWGEVSEPLSDTQMGAVARFGEMGFPVNDLMARCETVEALLAVYRDIEARRAGLGYDIDGVVYKADRLDWQERLGFVARAPRWAIAHKFPAEQATTILEAIDIQVGRTGALTPVARLTPVTVGGVVVTNATLHNQDEIERKDIRVGDTVVIQRAGDVIPQVVRVVDPDRPGRGEAFDFPTECPVCGSQALREHDAKTGKLDVVRRCTGGLICGAQLKERLKHFVSRKAFDIEGLGIKQIEAFQEEGLITEPAHIFTLKARNEAGEIKPPLQEREGFGETSIRNLFTSIEDRRTITLARFLNALGIRHVGENTSALFARTYGSWAAFHAAAANLSDEAVRAEMLGIDGIGNAAVEALEQYFTEAHNRDLLDRLVAQLTIEDAEAIANDSPVAGKTVVFTGALERMTRDEAKAKAQALGAKVAGSVSGKTDYLVAGPGAGSKAKKAAELGVETLTEDEWFDLIGA</sequence>
<accession>Q0AMX9</accession>
<name>DNLJ_MARMM</name>
<comment type="function">
    <text evidence="1">DNA ligase that catalyzes the formation of phosphodiester linkages between 5'-phosphoryl and 3'-hydroxyl groups in double-stranded DNA using NAD as a coenzyme and as the energy source for the reaction. It is essential for DNA replication and repair of damaged DNA.</text>
</comment>
<comment type="catalytic activity">
    <reaction evidence="1">
        <text>NAD(+) + (deoxyribonucleotide)n-3'-hydroxyl + 5'-phospho-(deoxyribonucleotide)m = (deoxyribonucleotide)n+m + AMP + beta-nicotinamide D-nucleotide.</text>
        <dbReference type="EC" id="6.5.1.2"/>
    </reaction>
</comment>
<comment type="cofactor">
    <cofactor evidence="1">
        <name>Mg(2+)</name>
        <dbReference type="ChEBI" id="CHEBI:18420"/>
    </cofactor>
    <cofactor evidence="1">
        <name>Mn(2+)</name>
        <dbReference type="ChEBI" id="CHEBI:29035"/>
    </cofactor>
</comment>
<comment type="similarity">
    <text evidence="1">Belongs to the NAD-dependent DNA ligase family. LigA subfamily.</text>
</comment>
<reference key="1">
    <citation type="submission" date="2006-08" db="EMBL/GenBank/DDBJ databases">
        <title>Complete sequence of Maricaulis maris MCS10.</title>
        <authorList>
            <consortium name="US DOE Joint Genome Institute"/>
            <person name="Copeland A."/>
            <person name="Lucas S."/>
            <person name="Lapidus A."/>
            <person name="Barry K."/>
            <person name="Detter J.C."/>
            <person name="Glavina del Rio T."/>
            <person name="Hammon N."/>
            <person name="Israni S."/>
            <person name="Dalin E."/>
            <person name="Tice H."/>
            <person name="Pitluck S."/>
            <person name="Saunders E."/>
            <person name="Brettin T."/>
            <person name="Bruce D."/>
            <person name="Han C."/>
            <person name="Tapia R."/>
            <person name="Gilna P."/>
            <person name="Schmutz J."/>
            <person name="Larimer F."/>
            <person name="Land M."/>
            <person name="Hauser L."/>
            <person name="Kyrpides N."/>
            <person name="Mikhailova N."/>
            <person name="Viollier P."/>
            <person name="Stephens C."/>
            <person name="Richardson P."/>
        </authorList>
    </citation>
    <scope>NUCLEOTIDE SEQUENCE [LARGE SCALE GENOMIC DNA]</scope>
    <source>
        <strain>MCS10</strain>
    </source>
</reference>
<proteinExistence type="inferred from homology"/>
<dbReference type="EC" id="6.5.1.2" evidence="1"/>
<dbReference type="EMBL" id="CP000449">
    <property type="protein sequence ID" value="ABI66358.1"/>
    <property type="molecule type" value="Genomic_DNA"/>
</dbReference>
<dbReference type="RefSeq" id="WP_011644003.1">
    <property type="nucleotide sequence ID" value="NC_008347.1"/>
</dbReference>
<dbReference type="SMR" id="Q0AMX9"/>
<dbReference type="STRING" id="394221.Mmar10_2066"/>
<dbReference type="KEGG" id="mmr:Mmar10_2066"/>
<dbReference type="eggNOG" id="COG0272">
    <property type="taxonomic scope" value="Bacteria"/>
</dbReference>
<dbReference type="HOGENOM" id="CLU_007764_2_0_5"/>
<dbReference type="OrthoDB" id="9759736at2"/>
<dbReference type="Proteomes" id="UP000001964">
    <property type="component" value="Chromosome"/>
</dbReference>
<dbReference type="GO" id="GO:0005829">
    <property type="term" value="C:cytosol"/>
    <property type="evidence" value="ECO:0007669"/>
    <property type="project" value="TreeGrafter"/>
</dbReference>
<dbReference type="GO" id="GO:0003911">
    <property type="term" value="F:DNA ligase (NAD+) activity"/>
    <property type="evidence" value="ECO:0007669"/>
    <property type="project" value="UniProtKB-UniRule"/>
</dbReference>
<dbReference type="GO" id="GO:0046872">
    <property type="term" value="F:metal ion binding"/>
    <property type="evidence" value="ECO:0007669"/>
    <property type="project" value="UniProtKB-KW"/>
</dbReference>
<dbReference type="GO" id="GO:0006281">
    <property type="term" value="P:DNA repair"/>
    <property type="evidence" value="ECO:0007669"/>
    <property type="project" value="UniProtKB-KW"/>
</dbReference>
<dbReference type="GO" id="GO:0006260">
    <property type="term" value="P:DNA replication"/>
    <property type="evidence" value="ECO:0007669"/>
    <property type="project" value="UniProtKB-KW"/>
</dbReference>
<dbReference type="CDD" id="cd17748">
    <property type="entry name" value="BRCT_DNA_ligase_like"/>
    <property type="match status" value="1"/>
</dbReference>
<dbReference type="CDD" id="cd00114">
    <property type="entry name" value="LIGANc"/>
    <property type="match status" value="1"/>
</dbReference>
<dbReference type="FunFam" id="2.40.50.140:FF:000012">
    <property type="entry name" value="DNA ligase"/>
    <property type="match status" value="1"/>
</dbReference>
<dbReference type="FunFam" id="3.30.470.30:FF:000001">
    <property type="entry name" value="DNA ligase"/>
    <property type="match status" value="1"/>
</dbReference>
<dbReference type="Gene3D" id="6.20.10.30">
    <property type="match status" value="1"/>
</dbReference>
<dbReference type="Gene3D" id="1.10.150.20">
    <property type="entry name" value="5' to 3' exonuclease, C-terminal subdomain"/>
    <property type="match status" value="2"/>
</dbReference>
<dbReference type="Gene3D" id="3.40.50.10190">
    <property type="entry name" value="BRCT domain"/>
    <property type="match status" value="1"/>
</dbReference>
<dbReference type="Gene3D" id="3.30.470.30">
    <property type="entry name" value="DNA ligase/mRNA capping enzyme"/>
    <property type="match status" value="1"/>
</dbReference>
<dbReference type="Gene3D" id="1.10.287.610">
    <property type="entry name" value="Helix hairpin bin"/>
    <property type="match status" value="1"/>
</dbReference>
<dbReference type="Gene3D" id="2.40.50.140">
    <property type="entry name" value="Nucleic acid-binding proteins"/>
    <property type="match status" value="1"/>
</dbReference>
<dbReference type="HAMAP" id="MF_01588">
    <property type="entry name" value="DNA_ligase_A"/>
    <property type="match status" value="1"/>
</dbReference>
<dbReference type="InterPro" id="IPR001357">
    <property type="entry name" value="BRCT_dom"/>
</dbReference>
<dbReference type="InterPro" id="IPR036420">
    <property type="entry name" value="BRCT_dom_sf"/>
</dbReference>
<dbReference type="InterPro" id="IPR041663">
    <property type="entry name" value="DisA/LigA_HHH"/>
</dbReference>
<dbReference type="InterPro" id="IPR001679">
    <property type="entry name" value="DNA_ligase"/>
</dbReference>
<dbReference type="InterPro" id="IPR018239">
    <property type="entry name" value="DNA_ligase_AS"/>
</dbReference>
<dbReference type="InterPro" id="IPR033136">
    <property type="entry name" value="DNA_ligase_CS"/>
</dbReference>
<dbReference type="InterPro" id="IPR013839">
    <property type="entry name" value="DNAligase_adenylation"/>
</dbReference>
<dbReference type="InterPro" id="IPR013840">
    <property type="entry name" value="DNAligase_N"/>
</dbReference>
<dbReference type="InterPro" id="IPR012340">
    <property type="entry name" value="NA-bd_OB-fold"/>
</dbReference>
<dbReference type="InterPro" id="IPR004150">
    <property type="entry name" value="NAD_DNA_ligase_OB"/>
</dbReference>
<dbReference type="InterPro" id="IPR010994">
    <property type="entry name" value="RuvA_2-like"/>
</dbReference>
<dbReference type="InterPro" id="IPR004149">
    <property type="entry name" value="Znf_DNAligase_C4"/>
</dbReference>
<dbReference type="NCBIfam" id="TIGR00575">
    <property type="entry name" value="dnlj"/>
    <property type="match status" value="1"/>
</dbReference>
<dbReference type="NCBIfam" id="NF005932">
    <property type="entry name" value="PRK07956.1"/>
    <property type="match status" value="1"/>
</dbReference>
<dbReference type="PANTHER" id="PTHR23389">
    <property type="entry name" value="CHROMOSOME TRANSMISSION FIDELITY FACTOR 18"/>
    <property type="match status" value="1"/>
</dbReference>
<dbReference type="PANTHER" id="PTHR23389:SF9">
    <property type="entry name" value="DNA LIGASE"/>
    <property type="match status" value="1"/>
</dbReference>
<dbReference type="Pfam" id="PF00533">
    <property type="entry name" value="BRCT"/>
    <property type="match status" value="1"/>
</dbReference>
<dbReference type="Pfam" id="PF01653">
    <property type="entry name" value="DNA_ligase_aden"/>
    <property type="match status" value="1"/>
</dbReference>
<dbReference type="Pfam" id="PF03120">
    <property type="entry name" value="DNA_ligase_OB"/>
    <property type="match status" value="1"/>
</dbReference>
<dbReference type="Pfam" id="PF03119">
    <property type="entry name" value="DNA_ligase_ZBD"/>
    <property type="match status" value="1"/>
</dbReference>
<dbReference type="Pfam" id="PF12826">
    <property type="entry name" value="HHH_2"/>
    <property type="match status" value="1"/>
</dbReference>
<dbReference type="PIRSF" id="PIRSF001604">
    <property type="entry name" value="LigA"/>
    <property type="match status" value="1"/>
</dbReference>
<dbReference type="SMART" id="SM00292">
    <property type="entry name" value="BRCT"/>
    <property type="match status" value="1"/>
</dbReference>
<dbReference type="SMART" id="SM00532">
    <property type="entry name" value="LIGANc"/>
    <property type="match status" value="1"/>
</dbReference>
<dbReference type="SUPFAM" id="SSF52113">
    <property type="entry name" value="BRCT domain"/>
    <property type="match status" value="1"/>
</dbReference>
<dbReference type="SUPFAM" id="SSF56091">
    <property type="entry name" value="DNA ligase/mRNA capping enzyme, catalytic domain"/>
    <property type="match status" value="1"/>
</dbReference>
<dbReference type="SUPFAM" id="SSF50249">
    <property type="entry name" value="Nucleic acid-binding proteins"/>
    <property type="match status" value="1"/>
</dbReference>
<dbReference type="SUPFAM" id="SSF47781">
    <property type="entry name" value="RuvA domain 2-like"/>
    <property type="match status" value="1"/>
</dbReference>
<dbReference type="PROSITE" id="PS50172">
    <property type="entry name" value="BRCT"/>
    <property type="match status" value="1"/>
</dbReference>
<dbReference type="PROSITE" id="PS01055">
    <property type="entry name" value="DNA_LIGASE_N1"/>
    <property type="match status" value="1"/>
</dbReference>
<dbReference type="PROSITE" id="PS01056">
    <property type="entry name" value="DNA_LIGASE_N2"/>
    <property type="match status" value="1"/>
</dbReference>
<gene>
    <name evidence="1" type="primary">ligA</name>
    <name type="ordered locus">Mmar10_2066</name>
</gene>
<evidence type="ECO:0000255" key="1">
    <source>
        <dbReference type="HAMAP-Rule" id="MF_01588"/>
    </source>
</evidence>